<reference evidence="14" key="1">
    <citation type="journal article" date="2000" name="Science">
        <title>The genome sequence of Drosophila melanogaster.</title>
        <authorList>
            <person name="Adams M.D."/>
            <person name="Celniker S.E."/>
            <person name="Holt R.A."/>
            <person name="Evans C.A."/>
            <person name="Gocayne J.D."/>
            <person name="Amanatides P.G."/>
            <person name="Scherer S.E."/>
            <person name="Li P.W."/>
            <person name="Hoskins R.A."/>
            <person name="Galle R.F."/>
            <person name="George R.A."/>
            <person name="Lewis S.E."/>
            <person name="Richards S."/>
            <person name="Ashburner M."/>
            <person name="Henderson S.N."/>
            <person name="Sutton G.G."/>
            <person name="Wortman J.R."/>
            <person name="Yandell M.D."/>
            <person name="Zhang Q."/>
            <person name="Chen L.X."/>
            <person name="Brandon R.C."/>
            <person name="Rogers Y.-H.C."/>
            <person name="Blazej R.G."/>
            <person name="Champe M."/>
            <person name="Pfeiffer B.D."/>
            <person name="Wan K.H."/>
            <person name="Doyle C."/>
            <person name="Baxter E.G."/>
            <person name="Helt G."/>
            <person name="Nelson C.R."/>
            <person name="Miklos G.L.G."/>
            <person name="Abril J.F."/>
            <person name="Agbayani A."/>
            <person name="An H.-J."/>
            <person name="Andrews-Pfannkoch C."/>
            <person name="Baldwin D."/>
            <person name="Ballew R.M."/>
            <person name="Basu A."/>
            <person name="Baxendale J."/>
            <person name="Bayraktaroglu L."/>
            <person name="Beasley E.M."/>
            <person name="Beeson K.Y."/>
            <person name="Benos P.V."/>
            <person name="Berman B.P."/>
            <person name="Bhandari D."/>
            <person name="Bolshakov S."/>
            <person name="Borkova D."/>
            <person name="Botchan M.R."/>
            <person name="Bouck J."/>
            <person name="Brokstein P."/>
            <person name="Brottier P."/>
            <person name="Burtis K.C."/>
            <person name="Busam D.A."/>
            <person name="Butler H."/>
            <person name="Cadieu E."/>
            <person name="Center A."/>
            <person name="Chandra I."/>
            <person name="Cherry J.M."/>
            <person name="Cawley S."/>
            <person name="Dahlke C."/>
            <person name="Davenport L.B."/>
            <person name="Davies P."/>
            <person name="de Pablos B."/>
            <person name="Delcher A."/>
            <person name="Deng Z."/>
            <person name="Mays A.D."/>
            <person name="Dew I."/>
            <person name="Dietz S.M."/>
            <person name="Dodson K."/>
            <person name="Doup L.E."/>
            <person name="Downes M."/>
            <person name="Dugan-Rocha S."/>
            <person name="Dunkov B.C."/>
            <person name="Dunn P."/>
            <person name="Durbin K.J."/>
            <person name="Evangelista C.C."/>
            <person name="Ferraz C."/>
            <person name="Ferriera S."/>
            <person name="Fleischmann W."/>
            <person name="Fosler C."/>
            <person name="Gabrielian A.E."/>
            <person name="Garg N.S."/>
            <person name="Gelbart W.M."/>
            <person name="Glasser K."/>
            <person name="Glodek A."/>
            <person name="Gong F."/>
            <person name="Gorrell J.H."/>
            <person name="Gu Z."/>
            <person name="Guan P."/>
            <person name="Harris M."/>
            <person name="Harris N.L."/>
            <person name="Harvey D.A."/>
            <person name="Heiman T.J."/>
            <person name="Hernandez J.R."/>
            <person name="Houck J."/>
            <person name="Hostin D."/>
            <person name="Houston K.A."/>
            <person name="Howland T.J."/>
            <person name="Wei M.-H."/>
            <person name="Ibegwam C."/>
            <person name="Jalali M."/>
            <person name="Kalush F."/>
            <person name="Karpen G.H."/>
            <person name="Ke Z."/>
            <person name="Kennison J.A."/>
            <person name="Ketchum K.A."/>
            <person name="Kimmel B.E."/>
            <person name="Kodira C.D."/>
            <person name="Kraft C.L."/>
            <person name="Kravitz S."/>
            <person name="Kulp D."/>
            <person name="Lai Z."/>
            <person name="Lasko P."/>
            <person name="Lei Y."/>
            <person name="Levitsky A.A."/>
            <person name="Li J.H."/>
            <person name="Li Z."/>
            <person name="Liang Y."/>
            <person name="Lin X."/>
            <person name="Liu X."/>
            <person name="Mattei B."/>
            <person name="McIntosh T.C."/>
            <person name="McLeod M.P."/>
            <person name="McPherson D."/>
            <person name="Merkulov G."/>
            <person name="Milshina N.V."/>
            <person name="Mobarry C."/>
            <person name="Morris J."/>
            <person name="Moshrefi A."/>
            <person name="Mount S.M."/>
            <person name="Moy M."/>
            <person name="Murphy B."/>
            <person name="Murphy L."/>
            <person name="Muzny D.M."/>
            <person name="Nelson D.L."/>
            <person name="Nelson D.R."/>
            <person name="Nelson K.A."/>
            <person name="Nixon K."/>
            <person name="Nusskern D.R."/>
            <person name="Pacleb J.M."/>
            <person name="Palazzolo M."/>
            <person name="Pittman G.S."/>
            <person name="Pan S."/>
            <person name="Pollard J."/>
            <person name="Puri V."/>
            <person name="Reese M.G."/>
            <person name="Reinert K."/>
            <person name="Remington K."/>
            <person name="Saunders R.D.C."/>
            <person name="Scheeler F."/>
            <person name="Shen H."/>
            <person name="Shue B.C."/>
            <person name="Siden-Kiamos I."/>
            <person name="Simpson M."/>
            <person name="Skupski M.P."/>
            <person name="Smith T.J."/>
            <person name="Spier E."/>
            <person name="Spradling A.C."/>
            <person name="Stapleton M."/>
            <person name="Strong R."/>
            <person name="Sun E."/>
            <person name="Svirskas R."/>
            <person name="Tector C."/>
            <person name="Turner R."/>
            <person name="Venter E."/>
            <person name="Wang A.H."/>
            <person name="Wang X."/>
            <person name="Wang Z.-Y."/>
            <person name="Wassarman D.A."/>
            <person name="Weinstock G.M."/>
            <person name="Weissenbach J."/>
            <person name="Williams S.M."/>
            <person name="Woodage T."/>
            <person name="Worley K.C."/>
            <person name="Wu D."/>
            <person name="Yang S."/>
            <person name="Yao Q.A."/>
            <person name="Ye J."/>
            <person name="Yeh R.-F."/>
            <person name="Zaveri J.S."/>
            <person name="Zhan M."/>
            <person name="Zhang G."/>
            <person name="Zhao Q."/>
            <person name="Zheng L."/>
            <person name="Zheng X.H."/>
            <person name="Zhong F.N."/>
            <person name="Zhong W."/>
            <person name="Zhou X."/>
            <person name="Zhu S.C."/>
            <person name="Zhu X."/>
            <person name="Smith H.O."/>
            <person name="Gibbs R.A."/>
            <person name="Myers E.W."/>
            <person name="Rubin G.M."/>
            <person name="Venter J.C."/>
        </authorList>
    </citation>
    <scope>NUCLEOTIDE SEQUENCE [LARGE SCALE GENOMIC DNA]</scope>
    <source>
        <strain evidence="14">Berkeley</strain>
    </source>
</reference>
<reference evidence="14" key="2">
    <citation type="journal article" date="2002" name="Genome Biol.">
        <title>Annotation of the Drosophila melanogaster euchromatic genome: a systematic review.</title>
        <authorList>
            <person name="Misra S."/>
            <person name="Crosby M.A."/>
            <person name="Mungall C.J."/>
            <person name="Matthews B.B."/>
            <person name="Campbell K.S."/>
            <person name="Hradecky P."/>
            <person name="Huang Y."/>
            <person name="Kaminker J.S."/>
            <person name="Millburn G.H."/>
            <person name="Prochnik S.E."/>
            <person name="Smith C.D."/>
            <person name="Tupy J.L."/>
            <person name="Whitfield E.J."/>
            <person name="Bayraktaroglu L."/>
            <person name="Berman B.P."/>
            <person name="Bettencourt B.R."/>
            <person name="Celniker S.E."/>
            <person name="de Grey A.D.N.J."/>
            <person name="Drysdale R.A."/>
            <person name="Harris N.L."/>
            <person name="Richter J."/>
            <person name="Russo S."/>
            <person name="Schroeder A.J."/>
            <person name="Shu S.Q."/>
            <person name="Stapleton M."/>
            <person name="Yamada C."/>
            <person name="Ashburner M."/>
            <person name="Gelbart W.M."/>
            <person name="Rubin G.M."/>
            <person name="Lewis S.E."/>
        </authorList>
    </citation>
    <scope>GENOME REANNOTATION</scope>
    <source>
        <strain evidence="14">Berkeley</strain>
    </source>
</reference>
<reference evidence="9 10 11" key="3">
    <citation type="journal article" date="2002" name="Genome Biol.">
        <title>A Drosophila full-length cDNA resource.</title>
        <authorList>
            <person name="Stapleton M."/>
            <person name="Carlson J.W."/>
            <person name="Brokstein P."/>
            <person name="Yu C."/>
            <person name="Champe M."/>
            <person name="George R.A."/>
            <person name="Guarin H."/>
            <person name="Kronmiller B."/>
            <person name="Pacleb J.M."/>
            <person name="Park S."/>
            <person name="Wan K.H."/>
            <person name="Rubin G.M."/>
            <person name="Celniker S.E."/>
        </authorList>
    </citation>
    <scope>NUCLEOTIDE SEQUENCE [LARGE SCALE MRNA]</scope>
    <source>
        <strain>Berkeley</strain>
        <tissue>Embryo</tissue>
    </source>
</reference>
<reference evidence="12" key="4">
    <citation type="submission" date="2006-01" db="EMBL/GenBank/DDBJ databases">
        <authorList>
            <person name="Stapleton M."/>
            <person name="Carlson J."/>
            <person name="Chavez C."/>
            <person name="Frise E."/>
            <person name="George R."/>
            <person name="Pacleb J."/>
            <person name="Park S."/>
            <person name="Wan K."/>
            <person name="Yu C."/>
            <person name="Celniker S."/>
        </authorList>
    </citation>
    <scope>NUCLEOTIDE SEQUENCE [LARGE SCALE MRNA]</scope>
    <source>
        <strain evidence="12">Berkeley</strain>
    </source>
</reference>
<reference evidence="6" key="5">
    <citation type="journal article" date="2016" name="PLoS Biol.">
        <title>The Deubiquitinase USP47 Stabilizes MAPK by Counteracting the Function of the N-end Rule ligase POE/UBR4 in Drosophila.</title>
        <authorList>
            <person name="Ashton-Beaucage D."/>
            <person name="Lemieux C."/>
            <person name="Udell C.M."/>
            <person name="Sahmi M."/>
            <person name="Rochette S."/>
            <person name="Therrien M."/>
        </authorList>
    </citation>
    <scope>FUNCTION</scope>
    <scope>INTERACTION WITH POE</scope>
</reference>
<protein>
    <recommendedName>
        <fullName evidence="6">E3 ubiquitin-protein ligase Kcmf1</fullName>
        <ecNumber evidence="7">2.3.2.27</ecNumber>
    </recommendedName>
</protein>
<organism evidence="14">
    <name type="scientific">Drosophila melanogaster</name>
    <name type="common">Fruit fly</name>
    <dbReference type="NCBI Taxonomy" id="7227"/>
    <lineage>
        <taxon>Eukaryota</taxon>
        <taxon>Metazoa</taxon>
        <taxon>Ecdysozoa</taxon>
        <taxon>Arthropoda</taxon>
        <taxon>Hexapoda</taxon>
        <taxon>Insecta</taxon>
        <taxon>Pterygota</taxon>
        <taxon>Neoptera</taxon>
        <taxon>Endopterygota</taxon>
        <taxon>Diptera</taxon>
        <taxon>Brachycera</taxon>
        <taxon>Muscomorpha</taxon>
        <taxon>Ephydroidea</taxon>
        <taxon>Drosophilidae</taxon>
        <taxon>Drosophila</taxon>
        <taxon>Sophophora</taxon>
    </lineage>
</organism>
<comment type="function">
    <text evidence="4 7">Has intrinsic E3 ubiquitin ligase activity and promotes ubiquitination. Involved in the negative regulation of the Ras/MAPK signaling pathway in the wing by acting with the E2 enzyme Unc6 and the putative E3 ligases poe and Ufd4 to mediate the ubiquitination and proteasomal degradation of rl/MAPK.</text>
</comment>
<comment type="catalytic activity">
    <reaction evidence="7">
        <text>S-ubiquitinyl-[E2 ubiquitin-conjugating enzyme]-L-cysteine + [acceptor protein]-L-lysine = [E2 ubiquitin-conjugating enzyme]-L-cysteine + N(6)-ubiquitinyl-[acceptor protein]-L-lysine.</text>
        <dbReference type="EC" id="2.3.2.27"/>
    </reaction>
</comment>
<comment type="subunit">
    <text evidence="4">Interacts with poe.</text>
</comment>
<comment type="similarity">
    <text evidence="6">Belongs to the KCMF1 family.</text>
</comment>
<feature type="chain" id="PRO_0000442702" description="E3 ubiquitin-protein ligase Kcmf1">
    <location>
        <begin position="1"/>
        <end position="599"/>
    </location>
</feature>
<feature type="zinc finger region" description="ZZ-type" evidence="2">
    <location>
        <begin position="4"/>
        <end position="60"/>
    </location>
</feature>
<feature type="zinc finger region" description="C2H2-type" evidence="1">
    <location>
        <begin position="78"/>
        <end position="101"/>
    </location>
</feature>
<feature type="region of interest" description="Disordered" evidence="3">
    <location>
        <begin position="155"/>
        <end position="193"/>
    </location>
</feature>
<feature type="region of interest" description="Disordered" evidence="3">
    <location>
        <begin position="229"/>
        <end position="253"/>
    </location>
</feature>
<feature type="region of interest" description="Disordered" evidence="3">
    <location>
        <begin position="269"/>
        <end position="294"/>
    </location>
</feature>
<feature type="region of interest" description="Disordered" evidence="3">
    <location>
        <begin position="466"/>
        <end position="486"/>
    </location>
</feature>
<feature type="region of interest" description="Disordered" evidence="3">
    <location>
        <begin position="507"/>
        <end position="599"/>
    </location>
</feature>
<feature type="compositionally biased region" description="Low complexity" evidence="3">
    <location>
        <begin position="160"/>
        <end position="170"/>
    </location>
</feature>
<feature type="compositionally biased region" description="Low complexity" evidence="3">
    <location>
        <begin position="180"/>
        <end position="192"/>
    </location>
</feature>
<feature type="compositionally biased region" description="Gly residues" evidence="3">
    <location>
        <begin position="269"/>
        <end position="285"/>
    </location>
</feature>
<feature type="compositionally biased region" description="Gly residues" evidence="3">
    <location>
        <begin position="513"/>
        <end position="532"/>
    </location>
</feature>
<feature type="compositionally biased region" description="Basic and acidic residues" evidence="3">
    <location>
        <begin position="538"/>
        <end position="547"/>
    </location>
</feature>
<feature type="compositionally biased region" description="Low complexity" evidence="3">
    <location>
        <begin position="559"/>
        <end position="593"/>
    </location>
</feature>
<feature type="binding site" evidence="2">
    <location>
        <position position="9"/>
    </location>
    <ligand>
        <name>Zn(2+)</name>
        <dbReference type="ChEBI" id="CHEBI:29105"/>
        <label>1</label>
    </ligand>
</feature>
<feature type="binding site" evidence="2">
    <location>
        <position position="12"/>
    </location>
    <ligand>
        <name>Zn(2+)</name>
        <dbReference type="ChEBI" id="CHEBI:29105"/>
        <label>1</label>
    </ligand>
</feature>
<feature type="binding site" evidence="2">
    <location>
        <position position="24"/>
    </location>
    <ligand>
        <name>Zn(2+)</name>
        <dbReference type="ChEBI" id="CHEBI:29105"/>
        <label>2</label>
    </ligand>
</feature>
<feature type="binding site" evidence="2">
    <location>
        <position position="27"/>
    </location>
    <ligand>
        <name>Zn(2+)</name>
        <dbReference type="ChEBI" id="CHEBI:29105"/>
        <label>2</label>
    </ligand>
</feature>
<feature type="binding site" evidence="2">
    <location>
        <position position="33"/>
    </location>
    <ligand>
        <name>Zn(2+)</name>
        <dbReference type="ChEBI" id="CHEBI:29105"/>
        <label>1</label>
    </ligand>
</feature>
<feature type="binding site" evidence="2">
    <location>
        <position position="36"/>
    </location>
    <ligand>
        <name>Zn(2+)</name>
        <dbReference type="ChEBI" id="CHEBI:29105"/>
        <label>1</label>
    </ligand>
</feature>
<feature type="binding site" evidence="2">
    <location>
        <position position="46"/>
    </location>
    <ligand>
        <name>Zn(2+)</name>
        <dbReference type="ChEBI" id="CHEBI:29105"/>
        <label>2</label>
    </ligand>
</feature>
<feature type="binding site" evidence="2">
    <location>
        <position position="50"/>
    </location>
    <ligand>
        <name>Zn(2+)</name>
        <dbReference type="ChEBI" id="CHEBI:29105"/>
        <label>2</label>
    </ligand>
</feature>
<name>KCMF1_DROME</name>
<dbReference type="EC" id="2.3.2.27" evidence="7"/>
<dbReference type="EMBL" id="AE014297">
    <property type="protein sequence ID" value="AAF54323.3"/>
    <property type="molecule type" value="Genomic_DNA"/>
</dbReference>
<dbReference type="EMBL" id="AE014297">
    <property type="protein sequence ID" value="AAF54324.3"/>
    <property type="molecule type" value="Genomic_DNA"/>
</dbReference>
<dbReference type="EMBL" id="AE014297">
    <property type="protein sequence ID" value="AAF54325.3"/>
    <property type="molecule type" value="Genomic_DNA"/>
</dbReference>
<dbReference type="EMBL" id="AE014297">
    <property type="protein sequence ID" value="ACZ94857.1"/>
    <property type="molecule type" value="Genomic_DNA"/>
</dbReference>
<dbReference type="EMBL" id="AE014297">
    <property type="protein sequence ID" value="ACZ94858.1"/>
    <property type="molecule type" value="Genomic_DNA"/>
</dbReference>
<dbReference type="EMBL" id="AE014297">
    <property type="protein sequence ID" value="ACZ94859.1"/>
    <property type="molecule type" value="Genomic_DNA"/>
</dbReference>
<dbReference type="EMBL" id="AY061066">
    <property type="protein sequence ID" value="AAL28614.1"/>
    <property type="molecule type" value="mRNA"/>
</dbReference>
<dbReference type="EMBL" id="BT001502">
    <property type="protein sequence ID" value="AAN71257.1"/>
    <property type="molecule type" value="mRNA"/>
</dbReference>
<dbReference type="EMBL" id="BT001483">
    <property type="protein sequence ID" value="AAN71238.1"/>
    <property type="molecule type" value="mRNA"/>
</dbReference>
<dbReference type="EMBL" id="BT024222">
    <property type="protein sequence ID" value="ABC86284.1"/>
    <property type="molecule type" value="mRNA"/>
</dbReference>
<dbReference type="RefSeq" id="NP_001163560.1">
    <property type="nucleotide sequence ID" value="NM_001170089.1"/>
</dbReference>
<dbReference type="RefSeq" id="NP_001163561.1">
    <property type="nucleotide sequence ID" value="NM_001170090.1"/>
</dbReference>
<dbReference type="RefSeq" id="NP_001163562.1">
    <property type="nucleotide sequence ID" value="NM_001170091.1"/>
</dbReference>
<dbReference type="RefSeq" id="NP_649861.3">
    <property type="nucleotide sequence ID" value="NM_141604.3"/>
</dbReference>
<dbReference type="RefSeq" id="NP_731305.2">
    <property type="nucleotide sequence ID" value="NM_169252.2"/>
</dbReference>
<dbReference type="RefSeq" id="NP_731306.2">
    <property type="nucleotide sequence ID" value="NM_169253.2"/>
</dbReference>
<dbReference type="SMR" id="Q95RX5"/>
<dbReference type="FunCoup" id="Q95RX5">
    <property type="interactions" value="366"/>
</dbReference>
<dbReference type="IntAct" id="Q95RX5">
    <property type="interactions" value="6"/>
</dbReference>
<dbReference type="STRING" id="7227.FBpp0289972"/>
<dbReference type="PaxDb" id="7227-FBpp0289967"/>
<dbReference type="DNASU" id="41082"/>
<dbReference type="EnsemblMetazoa" id="FBtr0300743">
    <property type="protein sequence ID" value="FBpp0289967"/>
    <property type="gene ID" value="FBgn0037655"/>
</dbReference>
<dbReference type="EnsemblMetazoa" id="FBtr0300744">
    <property type="protein sequence ID" value="FBpp0289968"/>
    <property type="gene ID" value="FBgn0037655"/>
</dbReference>
<dbReference type="EnsemblMetazoa" id="FBtr0300745">
    <property type="protein sequence ID" value="FBpp0289969"/>
    <property type="gene ID" value="FBgn0037655"/>
</dbReference>
<dbReference type="EnsemblMetazoa" id="FBtr0300746">
    <property type="protein sequence ID" value="FBpp0289970"/>
    <property type="gene ID" value="FBgn0037655"/>
</dbReference>
<dbReference type="EnsemblMetazoa" id="FBtr0300747">
    <property type="protein sequence ID" value="FBpp0289971"/>
    <property type="gene ID" value="FBgn0037655"/>
</dbReference>
<dbReference type="EnsemblMetazoa" id="FBtr0300748">
    <property type="protein sequence ID" value="FBpp0289972"/>
    <property type="gene ID" value="FBgn0037655"/>
</dbReference>
<dbReference type="GeneID" id="41082"/>
<dbReference type="KEGG" id="dme:Dmel_CG11984"/>
<dbReference type="UCSC" id="CG11984-RA">
    <property type="organism name" value="d. melanogaster"/>
</dbReference>
<dbReference type="UCSC" id="CG11984-RB">
    <property type="organism name" value="d. melanogaster"/>
</dbReference>
<dbReference type="AGR" id="FB:FBgn0037655"/>
<dbReference type="CTD" id="56888"/>
<dbReference type="FlyBase" id="FBgn0037655">
    <property type="gene designation" value="Kcmf1"/>
</dbReference>
<dbReference type="VEuPathDB" id="VectorBase:FBgn0037655"/>
<dbReference type="eggNOG" id="KOG1280">
    <property type="taxonomic scope" value="Eukaryota"/>
</dbReference>
<dbReference type="GeneTree" id="ENSGT00510000047171"/>
<dbReference type="HOGENOM" id="CLU_032080_2_0_1"/>
<dbReference type="InParanoid" id="Q95RX5"/>
<dbReference type="OMA" id="QGPREQY"/>
<dbReference type="OrthoDB" id="7873042at2759"/>
<dbReference type="PhylomeDB" id="Q95RX5"/>
<dbReference type="Reactome" id="R-DME-6798695">
    <property type="pathway name" value="Neutrophil degranulation"/>
</dbReference>
<dbReference type="SignaLink" id="Q95RX5"/>
<dbReference type="BioGRID-ORCS" id="41082">
    <property type="hits" value="1 hit in 1 CRISPR screen"/>
</dbReference>
<dbReference type="GenomeRNAi" id="41082"/>
<dbReference type="PRO" id="PR:Q95RX5"/>
<dbReference type="Proteomes" id="UP000000803">
    <property type="component" value="Chromosome 3R"/>
</dbReference>
<dbReference type="Bgee" id="FBgn0037655">
    <property type="expression patterns" value="Expressed in muscle cell in imaginal disc-derived wing and 244 other cell types or tissues"/>
</dbReference>
<dbReference type="GO" id="GO:0005886">
    <property type="term" value="C:plasma membrane"/>
    <property type="evidence" value="ECO:0000318"/>
    <property type="project" value="GO_Central"/>
</dbReference>
<dbReference type="GO" id="GO:0045202">
    <property type="term" value="C:synapse"/>
    <property type="evidence" value="ECO:0007669"/>
    <property type="project" value="GOC"/>
</dbReference>
<dbReference type="GO" id="GO:0061630">
    <property type="term" value="F:ubiquitin protein ligase activity"/>
    <property type="evidence" value="ECO:0000250"/>
    <property type="project" value="FlyBase"/>
</dbReference>
<dbReference type="GO" id="GO:0008270">
    <property type="term" value="F:zinc ion binding"/>
    <property type="evidence" value="ECO:0007669"/>
    <property type="project" value="UniProtKB-KW"/>
</dbReference>
<dbReference type="GO" id="GO:0070373">
    <property type="term" value="P:negative regulation of ERK1 and ERK2 cascade"/>
    <property type="evidence" value="ECO:0000316"/>
    <property type="project" value="FlyBase"/>
</dbReference>
<dbReference type="GO" id="GO:0032436">
    <property type="term" value="P:positive regulation of proteasomal ubiquitin-dependent protein catabolic process"/>
    <property type="evidence" value="ECO:0000315"/>
    <property type="project" value="FlyBase"/>
</dbReference>
<dbReference type="GO" id="GO:0099536">
    <property type="term" value="P:synaptic signaling"/>
    <property type="evidence" value="ECO:0000318"/>
    <property type="project" value="GO_Central"/>
</dbReference>
<dbReference type="CDD" id="cd02338">
    <property type="entry name" value="ZZ_PCMF_like"/>
    <property type="match status" value="1"/>
</dbReference>
<dbReference type="Gene3D" id="3.30.60.90">
    <property type="match status" value="1"/>
</dbReference>
<dbReference type="InterPro" id="IPR008598">
    <property type="entry name" value="Di19_Zn-bd"/>
</dbReference>
<dbReference type="InterPro" id="IPR050774">
    <property type="entry name" value="KCMF1/Dystrophin"/>
</dbReference>
<dbReference type="InterPro" id="IPR000433">
    <property type="entry name" value="Znf_ZZ"/>
</dbReference>
<dbReference type="InterPro" id="IPR043145">
    <property type="entry name" value="Znf_ZZ_sf"/>
</dbReference>
<dbReference type="PANTHER" id="PTHR12268">
    <property type="entry name" value="E3 UBIQUITIN-PROTEIN LIGASE KCMF1"/>
    <property type="match status" value="1"/>
</dbReference>
<dbReference type="PANTHER" id="PTHR12268:SF13">
    <property type="entry name" value="E3 UBIQUITIN-PROTEIN LIGASE KCMF1"/>
    <property type="match status" value="1"/>
</dbReference>
<dbReference type="Pfam" id="PF05605">
    <property type="entry name" value="zf-Di19"/>
    <property type="match status" value="1"/>
</dbReference>
<dbReference type="Pfam" id="PF00569">
    <property type="entry name" value="ZZ"/>
    <property type="match status" value="1"/>
</dbReference>
<dbReference type="SMART" id="SM00291">
    <property type="entry name" value="ZnF_ZZ"/>
    <property type="match status" value="1"/>
</dbReference>
<dbReference type="SUPFAM" id="SSF57850">
    <property type="entry name" value="RING/U-box"/>
    <property type="match status" value="1"/>
</dbReference>
<dbReference type="PROSITE" id="PS01357">
    <property type="entry name" value="ZF_ZZ_1"/>
    <property type="match status" value="1"/>
</dbReference>
<dbReference type="PROSITE" id="PS50135">
    <property type="entry name" value="ZF_ZZ_2"/>
    <property type="match status" value="1"/>
</dbReference>
<gene>
    <name evidence="5 13" type="primary">Kcmf1</name>
    <name evidence="8" type="ORF">CG11984</name>
</gene>
<accession>Q95RX5</accession>
<accession>Q0KI99</accession>
<sequence length="599" mass="62398">MSRHEGVSCDSCLKSNFNGRRYKCLICYDYDLCADCYEDGVTSTRHLVEHPMQCILTRSDIELYFGGEMLASDQPQSFTCPYCKKMGFSDATLLEHVSAEHTETSLEVVCPVCAGLPGGEPNLVTDDFAGHLTLEHRQGPRELISFLDEPSAIRHGGGVRRIPGRTLGGPRTRRSNMHFSSSSGLSALSPSGRESVDPIAELLSQLSGVRRGGPPTSQLQQLQMQMQLDRQQVTASRQIDRLPRRAHPIVSTSNSNAAMAEVISGGAGGSGGSGAVGSGSGGGSGATAPPNLRTTEWPVTASFSTSASNHSQTQSSLAANSLNAREAIGTSSSAGSNVLGISVGVGGTANGNGGAGSSGVATGAGGAGQGGGQGGAAAGESFLLAQFMQPTFTEAEWAVVESMRADRSMFVQSLMLSMLCTEALDLNASDESLAKSDNVNKGQQQQQEDAEAEAQAETLLNNNADVEQQQQQQQLQPAMVRQVNQMQQTSPEDFVCDEYRYKNKKANTTQTSGTGGLGGAGATAAPGGGASGAGTKPTADRGIERRSGRPPPGEMATGSQQPQQQQQSTANPAASQQKYKQNASAATAAGNTNQIPDTR</sequence>
<proteinExistence type="evidence at protein level"/>
<evidence type="ECO:0000255" key="1">
    <source>
        <dbReference type="PROSITE-ProRule" id="PRU00042"/>
    </source>
</evidence>
<evidence type="ECO:0000255" key="2">
    <source>
        <dbReference type="PROSITE-ProRule" id="PRU00228"/>
    </source>
</evidence>
<evidence type="ECO:0000256" key="3">
    <source>
        <dbReference type="SAM" id="MobiDB-lite"/>
    </source>
</evidence>
<evidence type="ECO:0000269" key="4">
    <source>
    </source>
</evidence>
<evidence type="ECO:0000303" key="5">
    <source>
    </source>
</evidence>
<evidence type="ECO:0000305" key="6"/>
<evidence type="ECO:0000305" key="7">
    <source>
    </source>
</evidence>
<evidence type="ECO:0000312" key="8">
    <source>
        <dbReference type="EMBL" id="AAF54323.3"/>
    </source>
</evidence>
<evidence type="ECO:0000312" key="9">
    <source>
        <dbReference type="EMBL" id="AAL28614.1"/>
    </source>
</evidence>
<evidence type="ECO:0000312" key="10">
    <source>
        <dbReference type="EMBL" id="AAN71238.1"/>
    </source>
</evidence>
<evidence type="ECO:0000312" key="11">
    <source>
        <dbReference type="EMBL" id="AAN71257.1"/>
    </source>
</evidence>
<evidence type="ECO:0000312" key="12">
    <source>
        <dbReference type="EMBL" id="ABC86284.1"/>
    </source>
</evidence>
<evidence type="ECO:0000312" key="13">
    <source>
        <dbReference type="FlyBase" id="FBgn0037655"/>
    </source>
</evidence>
<evidence type="ECO:0000312" key="14">
    <source>
        <dbReference type="Proteomes" id="UP000000803"/>
    </source>
</evidence>
<keyword id="KW-0479">Metal-binding</keyword>
<keyword id="KW-1185">Reference proteome</keyword>
<keyword id="KW-0808">Transferase</keyword>
<keyword id="KW-0833">Ubl conjugation pathway</keyword>
<keyword id="KW-0862">Zinc</keyword>
<keyword id="KW-0863">Zinc-finger</keyword>